<proteinExistence type="evidence at protein level"/>
<organism>
    <name type="scientific">Micromonospora viridifaciens</name>
    <dbReference type="NCBI Taxonomy" id="1881"/>
    <lineage>
        <taxon>Bacteria</taxon>
        <taxon>Bacillati</taxon>
        <taxon>Actinomycetota</taxon>
        <taxon>Actinomycetes</taxon>
        <taxon>Micromonosporales</taxon>
        <taxon>Micromonosporaceae</taxon>
        <taxon>Micromonospora</taxon>
    </lineage>
</organism>
<dbReference type="EC" id="3.2.1.18"/>
<dbReference type="EMBL" id="D01045">
    <property type="protein sequence ID" value="BAA00852.1"/>
    <property type="molecule type" value="Genomic_DNA"/>
</dbReference>
<dbReference type="PIR" id="A45244">
    <property type="entry name" value="A45244"/>
</dbReference>
<dbReference type="RefSeq" id="WP_089006911.1">
    <property type="nucleotide sequence ID" value="NZ_LT607411.1"/>
</dbReference>
<dbReference type="PDB" id="1EUR">
    <property type="method" value="X-ray"/>
    <property type="resolution" value="1.82 A"/>
    <property type="chains" value="A=43-407"/>
</dbReference>
<dbReference type="PDB" id="1EUS">
    <property type="method" value="X-ray"/>
    <property type="resolution" value="2.00 A"/>
    <property type="chains" value="A=43-407"/>
</dbReference>
<dbReference type="PDB" id="1EUT">
    <property type="method" value="X-ray"/>
    <property type="resolution" value="2.50 A"/>
    <property type="chains" value="A=43-647"/>
</dbReference>
<dbReference type="PDB" id="1EUU">
    <property type="method" value="X-ray"/>
    <property type="resolution" value="2.50 A"/>
    <property type="chains" value="A=43-647"/>
</dbReference>
<dbReference type="PDB" id="1W8N">
    <property type="method" value="X-ray"/>
    <property type="resolution" value="2.10 A"/>
    <property type="chains" value="A=47-647"/>
</dbReference>
<dbReference type="PDB" id="1W8O">
    <property type="method" value="X-ray"/>
    <property type="resolution" value="1.70 A"/>
    <property type="chains" value="A=47-647"/>
</dbReference>
<dbReference type="PDB" id="1WCQ">
    <property type="method" value="X-ray"/>
    <property type="resolution" value="2.10 A"/>
    <property type="chains" value="A/B/C=47-647"/>
</dbReference>
<dbReference type="PDB" id="2BER">
    <property type="method" value="X-ray"/>
    <property type="resolution" value="1.80 A"/>
    <property type="chains" value="A=47-647"/>
</dbReference>
<dbReference type="PDB" id="2BZD">
    <property type="method" value="X-ray"/>
    <property type="resolution" value="2.00 A"/>
    <property type="chains" value="A/B/C=47-647"/>
</dbReference>
<dbReference type="PDB" id="4J9T">
    <property type="method" value="X-ray"/>
    <property type="resolution" value="1.40 A"/>
    <property type="chains" value="A=47-407"/>
</dbReference>
<dbReference type="PDBsum" id="1EUR"/>
<dbReference type="PDBsum" id="1EUS"/>
<dbReference type="PDBsum" id="1EUT"/>
<dbReference type="PDBsum" id="1EUU"/>
<dbReference type="PDBsum" id="1W8N"/>
<dbReference type="PDBsum" id="1W8O"/>
<dbReference type="PDBsum" id="1WCQ"/>
<dbReference type="PDBsum" id="2BER"/>
<dbReference type="PDBsum" id="2BZD"/>
<dbReference type="PDBsum" id="4J9T"/>
<dbReference type="SMR" id="Q02834"/>
<dbReference type="DrugBank" id="DB03991">
    <property type="generic name" value="2-deoxy-2,3-dehydro-N-acetylneuraminic acid"/>
</dbReference>
<dbReference type="DrugBank" id="DB04465">
    <property type="generic name" value="Lactose"/>
</dbReference>
<dbReference type="DrugBank" id="DB04265">
    <property type="generic name" value="N-acetyl-beta-neuraminic acid"/>
</dbReference>
<dbReference type="CAZy" id="CBM32">
    <property type="family name" value="Carbohydrate-Binding Module Family 32"/>
</dbReference>
<dbReference type="CAZy" id="GH33">
    <property type="family name" value="Glycoside Hydrolase Family 33"/>
</dbReference>
<dbReference type="OrthoDB" id="41724at2"/>
<dbReference type="BRENDA" id="3.2.1.18">
    <property type="organism ID" value="7474"/>
</dbReference>
<dbReference type="SABIO-RK" id="Q02834"/>
<dbReference type="EvolutionaryTrace" id="Q02834"/>
<dbReference type="GO" id="GO:0005737">
    <property type="term" value="C:cytoplasm"/>
    <property type="evidence" value="ECO:0007669"/>
    <property type="project" value="TreeGrafter"/>
</dbReference>
<dbReference type="GO" id="GO:0005576">
    <property type="term" value="C:extracellular region"/>
    <property type="evidence" value="ECO:0007669"/>
    <property type="project" value="UniProtKB-SubCell"/>
</dbReference>
<dbReference type="GO" id="GO:0043231">
    <property type="term" value="C:intracellular membrane-bounded organelle"/>
    <property type="evidence" value="ECO:0007669"/>
    <property type="project" value="TreeGrafter"/>
</dbReference>
<dbReference type="GO" id="GO:0016020">
    <property type="term" value="C:membrane"/>
    <property type="evidence" value="ECO:0007669"/>
    <property type="project" value="TreeGrafter"/>
</dbReference>
<dbReference type="GO" id="GO:0004308">
    <property type="term" value="F:exo-alpha-sialidase activity"/>
    <property type="evidence" value="ECO:0007669"/>
    <property type="project" value="UniProtKB-EC"/>
</dbReference>
<dbReference type="GO" id="GO:0006689">
    <property type="term" value="P:ganglioside catabolic process"/>
    <property type="evidence" value="ECO:0007669"/>
    <property type="project" value="TreeGrafter"/>
</dbReference>
<dbReference type="GO" id="GO:0009313">
    <property type="term" value="P:oligosaccharide catabolic process"/>
    <property type="evidence" value="ECO:0007669"/>
    <property type="project" value="TreeGrafter"/>
</dbReference>
<dbReference type="CDD" id="cd00057">
    <property type="entry name" value="FA58C"/>
    <property type="match status" value="1"/>
</dbReference>
<dbReference type="CDD" id="cd15482">
    <property type="entry name" value="Sialidase_non-viral"/>
    <property type="match status" value="1"/>
</dbReference>
<dbReference type="Gene3D" id="2.120.10.10">
    <property type="match status" value="1"/>
</dbReference>
<dbReference type="Gene3D" id="2.60.120.260">
    <property type="entry name" value="Galactose-binding domain-like"/>
    <property type="match status" value="1"/>
</dbReference>
<dbReference type="Gene3D" id="2.60.40.10">
    <property type="entry name" value="Immunoglobulins"/>
    <property type="match status" value="1"/>
</dbReference>
<dbReference type="InterPro" id="IPR018905">
    <property type="entry name" value="A-galactase_NEW3"/>
</dbReference>
<dbReference type="InterPro" id="IPR000421">
    <property type="entry name" value="FA58C"/>
</dbReference>
<dbReference type="InterPro" id="IPR008979">
    <property type="entry name" value="Galactose-bd-like_sf"/>
</dbReference>
<dbReference type="InterPro" id="IPR013783">
    <property type="entry name" value="Ig-like_fold"/>
</dbReference>
<dbReference type="InterPro" id="IPR014756">
    <property type="entry name" value="Ig_E-set"/>
</dbReference>
<dbReference type="InterPro" id="IPR011040">
    <property type="entry name" value="Sialidase"/>
</dbReference>
<dbReference type="InterPro" id="IPR026856">
    <property type="entry name" value="Sialidase_fam"/>
</dbReference>
<dbReference type="InterPro" id="IPR036278">
    <property type="entry name" value="Sialidase_sf"/>
</dbReference>
<dbReference type="InterPro" id="IPR006311">
    <property type="entry name" value="TAT_signal"/>
</dbReference>
<dbReference type="PANTHER" id="PTHR10628:SF30">
    <property type="entry name" value="EXO-ALPHA-SIALIDASE"/>
    <property type="match status" value="1"/>
</dbReference>
<dbReference type="PANTHER" id="PTHR10628">
    <property type="entry name" value="SIALIDASE"/>
    <property type="match status" value="1"/>
</dbReference>
<dbReference type="Pfam" id="PF13088">
    <property type="entry name" value="BNR_2"/>
    <property type="match status" value="1"/>
</dbReference>
<dbReference type="Pfam" id="PF00754">
    <property type="entry name" value="F5_F8_type_C"/>
    <property type="match status" value="1"/>
</dbReference>
<dbReference type="Pfam" id="PF10633">
    <property type="entry name" value="NPCBM_assoc"/>
    <property type="match status" value="1"/>
</dbReference>
<dbReference type="SMART" id="SM00231">
    <property type="entry name" value="FA58C"/>
    <property type="match status" value="1"/>
</dbReference>
<dbReference type="SUPFAM" id="SSF81296">
    <property type="entry name" value="E set domains"/>
    <property type="match status" value="1"/>
</dbReference>
<dbReference type="SUPFAM" id="SSF49785">
    <property type="entry name" value="Galactose-binding domain-like"/>
    <property type="match status" value="1"/>
</dbReference>
<dbReference type="SUPFAM" id="SSF50939">
    <property type="entry name" value="Sialidases"/>
    <property type="match status" value="1"/>
</dbReference>
<dbReference type="PROSITE" id="PS50022">
    <property type="entry name" value="FA58C_3"/>
    <property type="match status" value="1"/>
</dbReference>
<dbReference type="PROSITE" id="PS51318">
    <property type="entry name" value="TAT"/>
    <property type="match status" value="1"/>
</dbReference>
<gene>
    <name type="primary">nedA</name>
</gene>
<feature type="signal peptide" evidence="4">
    <location>
        <begin position="1"/>
        <end position="37"/>
    </location>
</feature>
<feature type="chain" id="PRO_0000012032" description="Sialidase">
    <location>
        <begin position="38"/>
        <end position="647"/>
    </location>
</feature>
<feature type="repeat" description="BNR 1">
    <location>
        <begin position="102"/>
        <end position="113"/>
    </location>
</feature>
<feature type="repeat" description="BNR 2">
    <location>
        <begin position="175"/>
        <end position="186"/>
    </location>
</feature>
<feature type="repeat" description="BNR 3">
    <location>
        <begin position="239"/>
        <end position="250"/>
    </location>
</feature>
<feature type="repeat" description="BNR 4">
    <location>
        <begin position="287"/>
        <end position="298"/>
    </location>
</feature>
<feature type="repeat" description="BNR 5">
    <location>
        <begin position="348"/>
        <end position="359"/>
    </location>
</feature>
<feature type="domain" description="F5/8 type C" evidence="3">
    <location>
        <begin position="496"/>
        <end position="646"/>
    </location>
</feature>
<feature type="active site" description="Proton acceptor" evidence="1">
    <location>
        <position position="92"/>
    </location>
</feature>
<feature type="active site" description="Nucleophile" evidence="2">
    <location>
        <position position="260"/>
    </location>
</feature>
<feature type="active site" description="Nucleophile">
    <location>
        <position position="370"/>
    </location>
</feature>
<feature type="binding site" evidence="1">
    <location>
        <position position="68"/>
    </location>
    <ligand>
        <name>substrate</name>
    </ligand>
</feature>
<feature type="binding site" evidence="1">
    <location>
        <position position="276"/>
    </location>
    <ligand>
        <name>substrate</name>
    </ligand>
</feature>
<feature type="strand" evidence="10">
    <location>
        <begin position="51"/>
        <end position="58"/>
    </location>
</feature>
<feature type="strand" evidence="7">
    <location>
        <begin position="61"/>
        <end position="63"/>
    </location>
</feature>
<feature type="strand" evidence="10">
    <location>
        <begin position="65"/>
        <end position="74"/>
    </location>
</feature>
<feature type="strand" evidence="10">
    <location>
        <begin position="80"/>
        <end position="87"/>
    </location>
</feature>
<feature type="strand" evidence="10">
    <location>
        <begin position="98"/>
        <end position="106"/>
    </location>
</feature>
<feature type="strand" evidence="9">
    <location>
        <begin position="107"/>
        <end position="109"/>
    </location>
</feature>
<feature type="strand" evidence="10">
    <location>
        <begin position="115"/>
        <end position="118"/>
    </location>
</feature>
<feature type="strand" evidence="10">
    <location>
        <begin position="123"/>
        <end position="125"/>
    </location>
</feature>
<feature type="strand" evidence="10">
    <location>
        <begin position="127"/>
        <end position="136"/>
    </location>
</feature>
<feature type="turn" evidence="10">
    <location>
        <begin position="138"/>
        <end position="140"/>
    </location>
</feature>
<feature type="strand" evidence="10">
    <location>
        <begin position="143"/>
        <end position="152"/>
    </location>
</feature>
<feature type="turn" evidence="10">
    <location>
        <begin position="155"/>
        <end position="157"/>
    </location>
</feature>
<feature type="strand" evidence="10">
    <location>
        <begin position="171"/>
        <end position="179"/>
    </location>
</feature>
<feature type="strand" evidence="10">
    <location>
        <begin position="185"/>
        <end position="188"/>
    </location>
</feature>
<feature type="helix" evidence="10">
    <location>
        <begin position="190"/>
        <end position="193"/>
    </location>
</feature>
<feature type="strand" evidence="10">
    <location>
        <begin position="201"/>
        <end position="204"/>
    </location>
</feature>
<feature type="strand" evidence="10">
    <location>
        <begin position="206"/>
        <end position="208"/>
    </location>
</feature>
<feature type="turn" evidence="10">
    <location>
        <begin position="216"/>
        <end position="219"/>
    </location>
</feature>
<feature type="strand" evidence="10">
    <location>
        <begin position="221"/>
        <end position="228"/>
    </location>
</feature>
<feature type="strand" evidence="10">
    <location>
        <begin position="234"/>
        <end position="243"/>
    </location>
</feature>
<feature type="strand" evidence="10">
    <location>
        <begin position="260"/>
        <end position="265"/>
    </location>
</feature>
<feature type="strand" evidence="10">
    <location>
        <begin position="271"/>
        <end position="275"/>
    </location>
</feature>
<feature type="strand" evidence="10">
    <location>
        <begin position="282"/>
        <end position="291"/>
    </location>
</feature>
<feature type="strand" evidence="10">
    <location>
        <begin position="300"/>
        <end position="306"/>
    </location>
</feature>
<feature type="strand" evidence="10">
    <location>
        <begin position="313"/>
        <end position="318"/>
    </location>
</feature>
<feature type="helix" evidence="10">
    <location>
        <begin position="327"/>
        <end position="329"/>
    </location>
</feature>
<feature type="strand" evidence="10">
    <location>
        <begin position="331"/>
        <end position="336"/>
    </location>
</feature>
<feature type="strand" evidence="10">
    <location>
        <begin position="339"/>
        <end position="352"/>
    </location>
</feature>
<feature type="strand" evidence="10">
    <location>
        <begin position="359"/>
        <end position="367"/>
    </location>
</feature>
<feature type="strand" evidence="10">
    <location>
        <begin position="371"/>
        <end position="375"/>
    </location>
</feature>
<feature type="strand" evidence="10">
    <location>
        <begin position="381"/>
        <end position="385"/>
    </location>
</feature>
<feature type="strand" evidence="10">
    <location>
        <begin position="388"/>
        <end position="396"/>
    </location>
</feature>
<feature type="helix" evidence="10">
    <location>
        <begin position="398"/>
        <end position="401"/>
    </location>
</feature>
<feature type="strand" evidence="8">
    <location>
        <begin position="413"/>
        <end position="415"/>
    </location>
</feature>
<feature type="strand" evidence="8">
    <location>
        <begin position="420"/>
        <end position="428"/>
    </location>
</feature>
<feature type="strand" evidence="8">
    <location>
        <begin position="431"/>
        <end position="433"/>
    </location>
</feature>
<feature type="strand" evidence="8">
    <location>
        <begin position="435"/>
        <end position="437"/>
    </location>
</feature>
<feature type="strand" evidence="8">
    <location>
        <begin position="439"/>
        <end position="443"/>
    </location>
</feature>
<feature type="strand" evidence="8">
    <location>
        <begin position="448"/>
        <end position="454"/>
    </location>
</feature>
<feature type="strand" evidence="8">
    <location>
        <begin position="462"/>
        <end position="470"/>
    </location>
</feature>
<feature type="strand" evidence="8">
    <location>
        <begin position="478"/>
        <end position="488"/>
    </location>
</feature>
<feature type="strand" evidence="8">
    <location>
        <begin position="491"/>
        <end position="503"/>
    </location>
</feature>
<feature type="helix" evidence="8">
    <location>
        <begin position="506"/>
        <end position="508"/>
    </location>
</feature>
<feature type="strand" evidence="8">
    <location>
        <begin position="510"/>
        <end position="515"/>
    </location>
</feature>
<feature type="strand" evidence="8">
    <location>
        <begin position="520"/>
        <end position="522"/>
    </location>
</feature>
<feature type="helix" evidence="8">
    <location>
        <begin position="526"/>
        <end position="530"/>
    </location>
</feature>
<feature type="strand" evidence="6">
    <location>
        <begin position="543"/>
        <end position="545"/>
    </location>
</feature>
<feature type="strand" evidence="8">
    <location>
        <begin position="552"/>
        <end position="571"/>
    </location>
</feature>
<feature type="strand" evidence="9">
    <location>
        <begin position="576"/>
        <end position="578"/>
    </location>
</feature>
<feature type="strand" evidence="8">
    <location>
        <begin position="582"/>
        <end position="593"/>
    </location>
</feature>
<feature type="strand" evidence="8">
    <location>
        <begin position="595"/>
        <end position="602"/>
    </location>
</feature>
<feature type="strand" evidence="8">
    <location>
        <begin position="610"/>
        <end position="626"/>
    </location>
</feature>
<feature type="strand" evidence="8">
    <location>
        <begin position="637"/>
        <end position="645"/>
    </location>
</feature>
<sequence>MTANPYLRRLPRRRAVSFLLAPALAAATVAGASPAQAIAGAPVPPGGEPLYTEQDLAVNGREGFPNYRIPALTVTPDGDLLASYDGRPTGIDAPGPNSILQRRSTDGGRTWGEQQVVSAGQTTAPIKGFSDPSYLVDRETGTIFNFHVYSQRQGFAGSRPGTDPADPNVLHANVATSTDGGLTWSHRTITADITPDPGWRSRFAASGEGIQLRYGPHAGRLIQQYTIINAAGAFQAVSVYSDDHGRTWRAGEAVGVGMDENKTVELSDGRVLLNSRDSARSGYRKVAVSTDGGHSYGPVTIDRDLPDPTNNASIIRAFPDAPAGSARAKVLLFSNAASQTSRSQGTIRMSCDDGQTWPVSKVFQPGSMSYSTLTALPDGTYGLLYEPGTGIRYANFNLAWLGGICAPFTIPDVALEPGQQVTVPVAVTNQSGIAVPKPSLQLDASPDWQVQGSVEPLMPGRQAKGQVTITVPAGTTPGRYRVGATLRTSAGNASTTFTVTVGLLDQARMSIADVDSEETAREDGRASNVIDGNPSTFWHTEWSRADAPGYPHRISLDLGGTHTISGLQYTRRQNSANEQVADYEIYTSLNGTTWDGPVASGRFTTSLAPQRAVFPARDARYIRLVALSEQTGHKYAAVAELEVEGQR</sequence>
<reference key="1">
    <citation type="journal article" date="1992" name="J. Bacteriol.">
        <title>Cloning, expression, and characterization of the Micromonospora viridifaciens neuraminidase gene in Streptomyces lividans.</title>
        <authorList>
            <person name="Sakurada K."/>
            <person name="Ohta T."/>
            <person name="Hasegawa M."/>
        </authorList>
    </citation>
    <scope>NUCLEOTIDE SEQUENCE [GENOMIC DNA]</scope>
    <scope>PROTEIN SEQUENCE OF 38-647</scope>
    <source>
        <strain>ATCC 31146 / DSM 43909 / BCRC 13409 / JCM 3267 / NBRC 101887 / FD 23988</strain>
    </source>
</reference>
<reference key="2">
    <citation type="journal article" date="1995" name="Structure">
        <title>The three domains of a bacterial sialidase: a beta-propeller, an immunoglobulin module and a galactose-binding jelly-roll.</title>
        <authorList>
            <person name="Gaskell A."/>
            <person name="Crenell S."/>
            <person name="Taylor G."/>
        </authorList>
    </citation>
    <scope>X-RAY CRYSTALLOGRAPHY (1.8 ANGSTROMS)</scope>
    <source>
        <strain>ATCC 31146 / DSM 43909 / BCRC 13409 / JCM 3267 / NBRC 101887 / FD 23988</strain>
    </source>
</reference>
<protein>
    <recommendedName>
        <fullName>Sialidase</fullName>
        <ecNumber>3.2.1.18</ecNumber>
    </recommendedName>
    <alternativeName>
        <fullName>Neuraminidase</fullName>
    </alternativeName>
</protein>
<comment type="function">
    <text>To release sialic acids for use as carbon and energy sources for this non-pathogenic bacterium while in pathogenic microorganisms, sialidases have been suggested to be pathogenic factors.</text>
</comment>
<comment type="catalytic activity">
    <reaction>
        <text>Hydrolysis of alpha-(2-&gt;3)-, alpha-(2-&gt;6)-, alpha-(2-&gt;8)- glycosidic linkages of terminal sialic acid residues in oligosaccharides, glycoproteins, glycolipids, colominic acid and synthetic substrates.</text>
        <dbReference type="EC" id="3.2.1.18"/>
    </reaction>
</comment>
<comment type="subcellular location">
    <subcellularLocation>
        <location>Secreted</location>
    </subcellularLocation>
</comment>
<comment type="induction">
    <text>By N-acetylneuraminic acid, colominic acid, and sialic acid.</text>
</comment>
<comment type="similarity">
    <text evidence="5">Belongs to the glycosyl hydrolase 33 family.</text>
</comment>
<name>NANH_MICVI</name>
<evidence type="ECO:0000250" key="1"/>
<evidence type="ECO:0000255" key="2"/>
<evidence type="ECO:0000255" key="3">
    <source>
        <dbReference type="PROSITE-ProRule" id="PRU00081"/>
    </source>
</evidence>
<evidence type="ECO:0000269" key="4">
    <source>
    </source>
</evidence>
<evidence type="ECO:0000305" key="5"/>
<evidence type="ECO:0007829" key="6">
    <source>
        <dbReference type="PDB" id="1EUT"/>
    </source>
</evidence>
<evidence type="ECO:0007829" key="7">
    <source>
        <dbReference type="PDB" id="1W8N"/>
    </source>
</evidence>
<evidence type="ECO:0007829" key="8">
    <source>
        <dbReference type="PDB" id="1W8O"/>
    </source>
</evidence>
<evidence type="ECO:0007829" key="9">
    <source>
        <dbReference type="PDB" id="2BZD"/>
    </source>
</evidence>
<evidence type="ECO:0007829" key="10">
    <source>
        <dbReference type="PDB" id="4J9T"/>
    </source>
</evidence>
<accession>Q02834</accession>
<keyword id="KW-0002">3D-structure</keyword>
<keyword id="KW-0903">Direct protein sequencing</keyword>
<keyword id="KW-0326">Glycosidase</keyword>
<keyword id="KW-0378">Hydrolase</keyword>
<keyword id="KW-0677">Repeat</keyword>
<keyword id="KW-0964">Secreted</keyword>
<keyword id="KW-0732">Signal</keyword>